<feature type="chain" id="PRO_1000187442" description="Succinyl-diaminopimelate desuccinylase">
    <location>
        <begin position="1"/>
        <end position="395"/>
    </location>
</feature>
<feature type="active site" evidence="1">
    <location>
        <position position="76"/>
    </location>
</feature>
<feature type="active site" description="Proton acceptor" evidence="1">
    <location>
        <position position="141"/>
    </location>
</feature>
<feature type="binding site" evidence="1">
    <location>
        <position position="74"/>
    </location>
    <ligand>
        <name>Zn(2+)</name>
        <dbReference type="ChEBI" id="CHEBI:29105"/>
        <label>1</label>
    </ligand>
</feature>
<feature type="binding site" evidence="1">
    <location>
        <position position="107"/>
    </location>
    <ligand>
        <name>Zn(2+)</name>
        <dbReference type="ChEBI" id="CHEBI:29105"/>
        <label>1</label>
    </ligand>
</feature>
<feature type="binding site" evidence="1">
    <location>
        <position position="107"/>
    </location>
    <ligand>
        <name>Zn(2+)</name>
        <dbReference type="ChEBI" id="CHEBI:29105"/>
        <label>2</label>
    </ligand>
</feature>
<feature type="binding site" evidence="1">
    <location>
        <position position="142"/>
    </location>
    <ligand>
        <name>Zn(2+)</name>
        <dbReference type="ChEBI" id="CHEBI:29105"/>
        <label>2</label>
    </ligand>
</feature>
<feature type="binding site" evidence="1">
    <location>
        <position position="170"/>
    </location>
    <ligand>
        <name>Zn(2+)</name>
        <dbReference type="ChEBI" id="CHEBI:29105"/>
        <label>1</label>
    </ligand>
</feature>
<feature type="binding site" evidence="1">
    <location>
        <position position="368"/>
    </location>
    <ligand>
        <name>Zn(2+)</name>
        <dbReference type="ChEBI" id="CHEBI:29105"/>
        <label>2</label>
    </ligand>
</feature>
<comment type="function">
    <text evidence="1">Catalyzes the hydrolysis of N-succinyl-L,L-diaminopimelic acid (SDAP), forming succinate and LL-2,6-diaminopimelate (DAP), an intermediate involved in the bacterial biosynthesis of lysine and meso-diaminopimelic acid, an essential component of bacterial cell walls.</text>
</comment>
<comment type="catalytic activity">
    <reaction evidence="1">
        <text>N-succinyl-(2S,6S)-2,6-diaminopimelate + H2O = (2S,6S)-2,6-diaminopimelate + succinate</text>
        <dbReference type="Rhea" id="RHEA:22608"/>
        <dbReference type="ChEBI" id="CHEBI:15377"/>
        <dbReference type="ChEBI" id="CHEBI:30031"/>
        <dbReference type="ChEBI" id="CHEBI:57609"/>
        <dbReference type="ChEBI" id="CHEBI:58087"/>
        <dbReference type="EC" id="3.5.1.18"/>
    </reaction>
</comment>
<comment type="cofactor">
    <cofactor evidence="1">
        <name>Zn(2+)</name>
        <dbReference type="ChEBI" id="CHEBI:29105"/>
    </cofactor>
    <cofactor evidence="1">
        <name>Co(2+)</name>
        <dbReference type="ChEBI" id="CHEBI:48828"/>
    </cofactor>
    <text evidence="1">Binds 2 Zn(2+) or Co(2+) ions per subunit.</text>
</comment>
<comment type="pathway">
    <text evidence="1">Amino-acid biosynthesis; L-lysine biosynthesis via DAP pathway; LL-2,6-diaminopimelate from (S)-tetrahydrodipicolinate (succinylase route): step 3/3.</text>
</comment>
<comment type="subunit">
    <text evidence="1">Homodimer.</text>
</comment>
<comment type="similarity">
    <text evidence="1">Belongs to the peptidase M20A family. DapE subfamily.</text>
</comment>
<organism>
    <name type="scientific">Brucella melitensis biotype 2 (strain ATCC 23457)</name>
    <dbReference type="NCBI Taxonomy" id="546272"/>
    <lineage>
        <taxon>Bacteria</taxon>
        <taxon>Pseudomonadati</taxon>
        <taxon>Pseudomonadota</taxon>
        <taxon>Alphaproteobacteria</taxon>
        <taxon>Hyphomicrobiales</taxon>
        <taxon>Brucellaceae</taxon>
        <taxon>Brucella/Ochrobactrum group</taxon>
        <taxon>Brucella</taxon>
    </lineage>
</organism>
<keyword id="KW-0028">Amino-acid biosynthesis</keyword>
<keyword id="KW-0170">Cobalt</keyword>
<keyword id="KW-0220">Diaminopimelate biosynthesis</keyword>
<keyword id="KW-0378">Hydrolase</keyword>
<keyword id="KW-0457">Lysine biosynthesis</keyword>
<keyword id="KW-0479">Metal-binding</keyword>
<keyword id="KW-0862">Zinc</keyword>
<evidence type="ECO:0000255" key="1">
    <source>
        <dbReference type="HAMAP-Rule" id="MF_01690"/>
    </source>
</evidence>
<reference key="1">
    <citation type="submission" date="2009-03" db="EMBL/GenBank/DDBJ databases">
        <title>Brucella melitensis ATCC 23457 whole genome shotgun sequencing project.</title>
        <authorList>
            <person name="Setubal J.C."/>
            <person name="Boyle S."/>
            <person name="Crasta O.R."/>
            <person name="Gillespie J.J."/>
            <person name="Kenyon R.W."/>
            <person name="Lu J."/>
            <person name="Mane S."/>
            <person name="Nagrani S."/>
            <person name="Shallom J.M."/>
            <person name="Shallom S."/>
            <person name="Shukla M."/>
            <person name="Snyder E.E."/>
            <person name="Sobral B.W."/>
            <person name="Wattam A.R."/>
            <person name="Will R."/>
            <person name="Williams K."/>
            <person name="Yoo H."/>
            <person name="Munk C."/>
            <person name="Tapia R."/>
            <person name="Han C."/>
            <person name="Detter J.C."/>
            <person name="Bruce D."/>
            <person name="Brettin T.S."/>
        </authorList>
    </citation>
    <scope>NUCLEOTIDE SEQUENCE [LARGE SCALE GENOMIC DNA]</scope>
    <source>
        <strain>ATCC 23457</strain>
    </source>
</reference>
<accession>C0RMH0</accession>
<gene>
    <name evidence="1" type="primary">dapE</name>
    <name type="ordered locus">BMEA_B1016</name>
</gene>
<dbReference type="EC" id="3.5.1.18" evidence="1"/>
<dbReference type="EMBL" id="CP001489">
    <property type="protein sequence ID" value="ACO02803.1"/>
    <property type="molecule type" value="Genomic_DNA"/>
</dbReference>
<dbReference type="RefSeq" id="WP_002965620.1">
    <property type="nucleotide sequence ID" value="NC_012442.1"/>
</dbReference>
<dbReference type="SMR" id="C0RMH0"/>
<dbReference type="KEGG" id="bmi:BMEA_B1016"/>
<dbReference type="HOGENOM" id="CLU_021802_4_0_5"/>
<dbReference type="UniPathway" id="UPA00034">
    <property type="reaction ID" value="UER00021"/>
</dbReference>
<dbReference type="Proteomes" id="UP000001748">
    <property type="component" value="Chromosome II"/>
</dbReference>
<dbReference type="GO" id="GO:0008777">
    <property type="term" value="F:acetylornithine deacetylase activity"/>
    <property type="evidence" value="ECO:0007669"/>
    <property type="project" value="TreeGrafter"/>
</dbReference>
<dbReference type="GO" id="GO:0050897">
    <property type="term" value="F:cobalt ion binding"/>
    <property type="evidence" value="ECO:0007669"/>
    <property type="project" value="UniProtKB-UniRule"/>
</dbReference>
<dbReference type="GO" id="GO:0009014">
    <property type="term" value="F:succinyl-diaminopimelate desuccinylase activity"/>
    <property type="evidence" value="ECO:0007669"/>
    <property type="project" value="UniProtKB-UniRule"/>
</dbReference>
<dbReference type="GO" id="GO:0008270">
    <property type="term" value="F:zinc ion binding"/>
    <property type="evidence" value="ECO:0007669"/>
    <property type="project" value="UniProtKB-UniRule"/>
</dbReference>
<dbReference type="GO" id="GO:0019877">
    <property type="term" value="P:diaminopimelate biosynthetic process"/>
    <property type="evidence" value="ECO:0007669"/>
    <property type="project" value="UniProtKB-UniRule"/>
</dbReference>
<dbReference type="GO" id="GO:0006526">
    <property type="term" value="P:L-arginine biosynthetic process"/>
    <property type="evidence" value="ECO:0007669"/>
    <property type="project" value="TreeGrafter"/>
</dbReference>
<dbReference type="GO" id="GO:0009089">
    <property type="term" value="P:lysine biosynthetic process via diaminopimelate"/>
    <property type="evidence" value="ECO:0007669"/>
    <property type="project" value="UniProtKB-UniRule"/>
</dbReference>
<dbReference type="CDD" id="cd03891">
    <property type="entry name" value="M20_DapE_proteobac"/>
    <property type="match status" value="1"/>
</dbReference>
<dbReference type="Gene3D" id="3.30.70.360">
    <property type="match status" value="1"/>
</dbReference>
<dbReference type="Gene3D" id="3.40.630.10">
    <property type="entry name" value="Zn peptidases"/>
    <property type="match status" value="2"/>
</dbReference>
<dbReference type="HAMAP" id="MF_01690">
    <property type="entry name" value="DapE"/>
    <property type="match status" value="1"/>
</dbReference>
<dbReference type="InterPro" id="IPR001261">
    <property type="entry name" value="ArgE/DapE_CS"/>
</dbReference>
<dbReference type="InterPro" id="IPR036264">
    <property type="entry name" value="Bact_exopeptidase_dim_dom"/>
</dbReference>
<dbReference type="InterPro" id="IPR005941">
    <property type="entry name" value="DapE_proteobac"/>
</dbReference>
<dbReference type="InterPro" id="IPR002933">
    <property type="entry name" value="Peptidase_M20"/>
</dbReference>
<dbReference type="InterPro" id="IPR011650">
    <property type="entry name" value="Peptidase_M20_dimer"/>
</dbReference>
<dbReference type="InterPro" id="IPR050072">
    <property type="entry name" value="Peptidase_M20A"/>
</dbReference>
<dbReference type="NCBIfam" id="TIGR01246">
    <property type="entry name" value="dapE_proteo"/>
    <property type="match status" value="1"/>
</dbReference>
<dbReference type="NCBIfam" id="NF009557">
    <property type="entry name" value="PRK13009.1"/>
    <property type="match status" value="1"/>
</dbReference>
<dbReference type="PANTHER" id="PTHR43808">
    <property type="entry name" value="ACETYLORNITHINE DEACETYLASE"/>
    <property type="match status" value="1"/>
</dbReference>
<dbReference type="PANTHER" id="PTHR43808:SF31">
    <property type="entry name" value="N-ACETYL-L-CITRULLINE DEACETYLASE"/>
    <property type="match status" value="1"/>
</dbReference>
<dbReference type="Pfam" id="PF07687">
    <property type="entry name" value="M20_dimer"/>
    <property type="match status" value="1"/>
</dbReference>
<dbReference type="Pfam" id="PF01546">
    <property type="entry name" value="Peptidase_M20"/>
    <property type="match status" value="1"/>
</dbReference>
<dbReference type="SUPFAM" id="SSF55031">
    <property type="entry name" value="Bacterial exopeptidase dimerisation domain"/>
    <property type="match status" value="1"/>
</dbReference>
<dbReference type="SUPFAM" id="SSF53187">
    <property type="entry name" value="Zn-dependent exopeptidases"/>
    <property type="match status" value="1"/>
</dbReference>
<dbReference type="PROSITE" id="PS00758">
    <property type="entry name" value="ARGE_DAPE_CPG2_1"/>
    <property type="match status" value="1"/>
</dbReference>
<dbReference type="PROSITE" id="PS00759">
    <property type="entry name" value="ARGE_DAPE_CPG2_2"/>
    <property type="match status" value="1"/>
</dbReference>
<proteinExistence type="inferred from homology"/>
<sequence length="395" mass="42837">MTLPVNPVDNLAALIRCPSVTPAEGGALTALEKMLKLMGFSANRPVFSDDNTPDIENLYARKSGNGPHLMFAGHTDVVPPGDEKDWKHPPFAAAIEDGVMYGRGAVDMKGGIACFVAAVARHIEKHGNIKGSISFLITGDEEGPAVNGTVKLLEWAKQRGESWDASIVGEPTNPNALGDMIKIGRRGSLSGTITVHGVQGHAAYPHLAENPVRGIVTLVDSLLYPAFDEGTANFQASNLEVTTIDVGNKATNVIPNKATASFNIRFNDTWTAESLQAEIISRLERAARDNRLRQGRETPIKYELTWRERPSHVFLTHDEKLIGTLTASVEAVTGKRPELSTSGGTSDARFIKDYCPVVEFGLTGQTMHMVDERVALADLEGLTQIYERFIADFFG</sequence>
<protein>
    <recommendedName>
        <fullName evidence="1">Succinyl-diaminopimelate desuccinylase</fullName>
        <shortName evidence="1">SDAP desuccinylase</shortName>
        <ecNumber evidence="1">3.5.1.18</ecNumber>
    </recommendedName>
    <alternativeName>
        <fullName evidence="1">N-succinyl-LL-2,6-diaminoheptanedioate amidohydrolase</fullName>
    </alternativeName>
</protein>
<name>DAPE_BRUMB</name>